<sequence>MERKSSLKVRVQKLGTSLSNMVMPNIGAFIAWGVAASLFIATGYLPNKALDTNVVGPMLKYVLPLLIGYTGGYNIHKQRGGVIGAIASFGAIAGSTVTMFIGAMIMGPLSAWILKKFDEKVQPKIRTGFEMLVNNFSLGLIGFALMVLAFFVIGPVVAQLTEWVGIGVEAIVKVHLLPLANLIIEPAKILFLNNALNHGIFTPLGTEQVAKVGKSVLFLLEANPGPGLGVLIAYAMFGKGSAKSSSWGAMIIHFFGGIHEIYFPYVMMKPAMFLAVIAGGLTGTFTFQTLGAGLTAPASPGSIIAIMGMSPKGWGPHLVVLAGVFAAAVASFLVASIILKSDNSDDDSLETAQAVTQAAKAESKGQAVTEPNLHSDITTDNIHQIIFACDAGMGSSAMGASILRDKVKKAGLDISVSNQAISNLQDTANTLIVTQEELADRAGQKTPRAVHVAVDNFLATSKYDDIIASLTNGKASGSENAAHSTQADSAEIDLNQIDAVVFAYGIAKGSATMGQETLRSIFKQNNVKIPVSTASYAHLSDYNAKNILLVTTIAQQGQAQQAAPNAQILVVDSLVTTPEYDKLVARMHK</sequence>
<keyword id="KW-1003">Cell membrane</keyword>
<keyword id="KW-0418">Kinase</keyword>
<keyword id="KW-0472">Membrane</keyword>
<keyword id="KW-0597">Phosphoprotein</keyword>
<keyword id="KW-0598">Phosphotransferase system</keyword>
<keyword id="KW-1185">Reference proteome</keyword>
<keyword id="KW-0762">Sugar transport</keyword>
<keyword id="KW-0808">Transferase</keyword>
<keyword id="KW-0812">Transmembrane</keyword>
<keyword id="KW-1133">Transmembrane helix</keyword>
<keyword id="KW-0813">Transport</keyword>
<comment type="function">
    <text evidence="2">The phosphoenolpyruvate-dependent sugar phosphotransferase system (sugar PTS), a major carbohydrate active transport system, catalyzes the phosphorylation of incoming sugar substrates concomitantly with their translocation across the cell membrane. The enzyme II CmtAB PTS system is involved in D-mannitol transport.</text>
</comment>
<comment type="catalytic activity">
    <reaction evidence="1 2">
        <text>D-mannitol(out) + N(pros)-phospho-L-histidyl-[protein] = D-mannitol 1-phosphate(in) + L-histidyl-[protein]</text>
        <dbReference type="Rhea" id="RHEA:33363"/>
        <dbReference type="Rhea" id="RHEA-COMP:9745"/>
        <dbReference type="Rhea" id="RHEA-COMP:9746"/>
        <dbReference type="ChEBI" id="CHEBI:16899"/>
        <dbReference type="ChEBI" id="CHEBI:29979"/>
        <dbReference type="ChEBI" id="CHEBI:61381"/>
        <dbReference type="ChEBI" id="CHEBI:64837"/>
        <dbReference type="EC" id="2.7.1.197"/>
    </reaction>
</comment>
<comment type="subunit">
    <text evidence="2">Homodimer.</text>
</comment>
<comment type="subcellular location">
    <subcellularLocation>
        <location evidence="4">Cell membrane</location>
        <topology evidence="4">Multi-pass membrane protein</topology>
    </subcellularLocation>
</comment>
<comment type="domain">
    <text evidence="4">The EIIC type-2 domain forms the PTS system translocation channel and contains the specific substrate-binding site.</text>
</comment>
<comment type="domain">
    <text evidence="3">The PTS EIIB type-2 domain is phosphorylated by phospho-EIIA on a cysteinyl residue. Then, it transfers the phosphoryl group to the sugar substrate concomitantly with the sugar uptake processed by the PTS EIIC type-2 domain.</text>
</comment>
<comment type="sequence caution" evidence="6">
    <conflict type="erroneous initiation">
        <sequence resource="EMBL-CDS" id="AAN58875"/>
    </conflict>
    <text>Extended N-terminus.</text>
</comment>
<name>PTMCB_STRMU</name>
<proteinExistence type="inferred from homology"/>
<organism>
    <name type="scientific">Streptococcus mutans serotype c (strain ATCC 700610 / UA159)</name>
    <dbReference type="NCBI Taxonomy" id="210007"/>
    <lineage>
        <taxon>Bacteria</taxon>
        <taxon>Bacillati</taxon>
        <taxon>Bacillota</taxon>
        <taxon>Bacilli</taxon>
        <taxon>Lactobacillales</taxon>
        <taxon>Streptococcaceae</taxon>
        <taxon>Streptococcus</taxon>
    </lineage>
</organism>
<evidence type="ECO:0000250" key="1">
    <source>
        <dbReference type="UniProtKB" id="P00550"/>
    </source>
</evidence>
<evidence type="ECO:0000250" key="2">
    <source>
        <dbReference type="UniProtKB" id="P28008"/>
    </source>
</evidence>
<evidence type="ECO:0000255" key="3">
    <source>
        <dbReference type="PROSITE-ProRule" id="PRU00422"/>
    </source>
</evidence>
<evidence type="ECO:0000255" key="4">
    <source>
        <dbReference type="PROSITE-ProRule" id="PRU00427"/>
    </source>
</evidence>
<evidence type="ECO:0000303" key="5">
    <source>
    </source>
</evidence>
<evidence type="ECO:0000305" key="6"/>
<reference key="1">
    <citation type="journal article" date="2000" name="Microbiology">
        <title>The mannitol-specific enzyme II (mtlA) gene and the mtlR gene of the PTS of Streptococcus mutans.</title>
        <authorList>
            <person name="Honeyman A.L."/>
            <person name="Curtiss R. III"/>
        </authorList>
    </citation>
    <scope>NUCLEOTIDE SEQUENCE [GENOMIC DNA]</scope>
    <source>
        <strain>ATCC 700611 / UA130 / Serotype c</strain>
    </source>
</reference>
<reference key="2">
    <citation type="journal article" date="2002" name="Proc. Natl. Acad. Sci. U.S.A.">
        <title>Genome sequence of Streptococcus mutans UA159, a cariogenic dental pathogen.</title>
        <authorList>
            <person name="Ajdic D.J."/>
            <person name="McShan W.M."/>
            <person name="McLaughlin R.E."/>
            <person name="Savic G."/>
            <person name="Chang J."/>
            <person name="Carson M.B."/>
            <person name="Primeaux C."/>
            <person name="Tian R."/>
            <person name="Kenton S."/>
            <person name="Jia H.G."/>
            <person name="Lin S.P."/>
            <person name="Qian Y."/>
            <person name="Li S."/>
            <person name="Zhu H."/>
            <person name="Najar F.Z."/>
            <person name="Lai H."/>
            <person name="White J."/>
            <person name="Roe B.A."/>
            <person name="Ferretti J.J."/>
        </authorList>
    </citation>
    <scope>NUCLEOTIDE SEQUENCE [LARGE SCALE GENOMIC DNA]</scope>
    <source>
        <strain>ATCC 700610 / UA159</strain>
    </source>
</reference>
<accession>Q9KJ75</accession>
<accession>Q8DTY1</accession>
<dbReference type="EC" id="2.7.1.197" evidence="1 2"/>
<dbReference type="EMBL" id="AF210133">
    <property type="protein sequence ID" value="AAF89987.1"/>
    <property type="molecule type" value="Genomic_DNA"/>
</dbReference>
<dbReference type="EMBL" id="AE014133">
    <property type="protein sequence ID" value="AAN58875.1"/>
    <property type="status" value="ALT_INIT"/>
    <property type="molecule type" value="Genomic_DNA"/>
</dbReference>
<dbReference type="RefSeq" id="NP_721569.1">
    <property type="nucleotide sequence ID" value="NC_004350.2"/>
</dbReference>
<dbReference type="RefSeq" id="WP_002262165.1">
    <property type="nucleotide sequence ID" value="NC_004350.2"/>
</dbReference>
<dbReference type="SMR" id="Q9KJ75"/>
<dbReference type="STRING" id="210007.SMU_1185"/>
<dbReference type="KEGG" id="smu:SMU_1185"/>
<dbReference type="PATRIC" id="fig|210007.7.peg.1063"/>
<dbReference type="eggNOG" id="COG2213">
    <property type="taxonomic scope" value="Bacteria"/>
</dbReference>
<dbReference type="HOGENOM" id="CLU_028721_2_1_9"/>
<dbReference type="OrthoDB" id="9814222at2"/>
<dbReference type="Proteomes" id="UP000002512">
    <property type="component" value="Chromosome"/>
</dbReference>
<dbReference type="GO" id="GO:0005886">
    <property type="term" value="C:plasma membrane"/>
    <property type="evidence" value="ECO:0007669"/>
    <property type="project" value="UniProtKB-SubCell"/>
</dbReference>
<dbReference type="GO" id="GO:0016301">
    <property type="term" value="F:kinase activity"/>
    <property type="evidence" value="ECO:0007669"/>
    <property type="project" value="UniProtKB-KW"/>
</dbReference>
<dbReference type="GO" id="GO:0022872">
    <property type="term" value="F:protein-N(PI)-phosphohistidine-mannitol phosphotransferase system transmembrane transporter activity"/>
    <property type="evidence" value="ECO:0007669"/>
    <property type="project" value="InterPro"/>
</dbReference>
<dbReference type="GO" id="GO:0090563">
    <property type="term" value="F:protein-phosphocysteine-sugar phosphotransferase activity"/>
    <property type="evidence" value="ECO:0007669"/>
    <property type="project" value="TreeGrafter"/>
</dbReference>
<dbReference type="GO" id="GO:0009401">
    <property type="term" value="P:phosphoenolpyruvate-dependent sugar phosphotransferase system"/>
    <property type="evidence" value="ECO:0007669"/>
    <property type="project" value="UniProtKB-KW"/>
</dbReference>
<dbReference type="CDD" id="cd05567">
    <property type="entry name" value="PTS_IIB_mannitol"/>
    <property type="match status" value="1"/>
</dbReference>
<dbReference type="Gene3D" id="3.40.50.2300">
    <property type="match status" value="2"/>
</dbReference>
<dbReference type="InterPro" id="IPR036095">
    <property type="entry name" value="PTS_EIIB-like_sf"/>
</dbReference>
<dbReference type="InterPro" id="IPR013011">
    <property type="entry name" value="PTS_EIIB_2"/>
</dbReference>
<dbReference type="InterPro" id="IPR003501">
    <property type="entry name" value="PTS_EIIB_2/3"/>
</dbReference>
<dbReference type="InterPro" id="IPR029503">
    <property type="entry name" value="PTS_EIIB_mannitol"/>
</dbReference>
<dbReference type="InterPro" id="IPR003352">
    <property type="entry name" value="PTS_EIIC"/>
</dbReference>
<dbReference type="InterPro" id="IPR013014">
    <property type="entry name" value="PTS_EIIC_2"/>
</dbReference>
<dbReference type="InterPro" id="IPR004718">
    <property type="entry name" value="PTS_IIC_mtl"/>
</dbReference>
<dbReference type="InterPro" id="IPR050893">
    <property type="entry name" value="Sugar_PTS"/>
</dbReference>
<dbReference type="NCBIfam" id="TIGR00851">
    <property type="entry name" value="mtlA"/>
    <property type="match status" value="1"/>
</dbReference>
<dbReference type="NCBIfam" id="NF011663">
    <property type="entry name" value="PRK15083.1"/>
    <property type="match status" value="1"/>
</dbReference>
<dbReference type="PANTHER" id="PTHR30181">
    <property type="entry name" value="MANNITOL PERMEASE IIC COMPONENT"/>
    <property type="match status" value="1"/>
</dbReference>
<dbReference type="PANTHER" id="PTHR30181:SF2">
    <property type="entry name" value="PTS SYSTEM MANNITOL-SPECIFIC EIICBA COMPONENT"/>
    <property type="match status" value="1"/>
</dbReference>
<dbReference type="Pfam" id="PF02378">
    <property type="entry name" value="PTS_EIIC"/>
    <property type="match status" value="1"/>
</dbReference>
<dbReference type="Pfam" id="PF02302">
    <property type="entry name" value="PTS_IIB"/>
    <property type="match status" value="1"/>
</dbReference>
<dbReference type="SUPFAM" id="SSF52794">
    <property type="entry name" value="PTS system IIB component-like"/>
    <property type="match status" value="2"/>
</dbReference>
<dbReference type="PROSITE" id="PS51099">
    <property type="entry name" value="PTS_EIIB_TYPE_2"/>
    <property type="match status" value="1"/>
</dbReference>
<dbReference type="PROSITE" id="PS51104">
    <property type="entry name" value="PTS_EIIC_TYPE_2"/>
    <property type="match status" value="1"/>
</dbReference>
<feature type="chain" id="PRO_0000186629" description="PTS system mannitol-specific EIICB component">
    <location>
        <begin position="1"/>
        <end position="589"/>
    </location>
</feature>
<feature type="topological domain" description="Cytoplasmic" evidence="1">
    <location>
        <begin position="1"/>
        <end position="25"/>
    </location>
</feature>
<feature type="transmembrane region" description="Helical" evidence="1">
    <location>
        <begin position="26"/>
        <end position="47"/>
    </location>
</feature>
<feature type="topological domain" description="Extracellular" evidence="1">
    <location>
        <begin position="48"/>
        <end position="51"/>
    </location>
</feature>
<feature type="transmembrane region" description="Helical" evidence="1">
    <location>
        <begin position="52"/>
        <end position="73"/>
    </location>
</feature>
<feature type="topological domain" description="Cytoplasmic" evidence="1">
    <location>
        <begin position="74"/>
        <end position="136"/>
    </location>
</feature>
<feature type="transmembrane region" description="Helical" evidence="1">
    <location>
        <begin position="137"/>
        <end position="158"/>
    </location>
</feature>
<feature type="topological domain" description="Extracellular" evidence="1">
    <location>
        <begin position="159"/>
        <end position="167"/>
    </location>
</feature>
<feature type="transmembrane region" description="Helical" evidence="1">
    <location>
        <begin position="168"/>
        <end position="188"/>
    </location>
</feature>
<feature type="topological domain" description="Cytoplasmic" evidence="1">
    <location>
        <begin position="189"/>
        <end position="275"/>
    </location>
</feature>
<feature type="transmembrane region" description="Helical" evidence="1">
    <location>
        <begin position="276"/>
        <end position="295"/>
    </location>
</feature>
<feature type="topological domain" description="Extracellular" evidence="1">
    <location>
        <begin position="296"/>
        <end position="317"/>
    </location>
</feature>
<feature type="transmembrane region" description="Helical" evidence="1">
    <location>
        <begin position="318"/>
        <end position="339"/>
    </location>
</feature>
<feature type="topological domain" description="Cytoplasmic" evidence="1">
    <location>
        <begin position="340"/>
        <end position="589"/>
    </location>
</feature>
<feature type="domain" description="PTS EIIC type-2" evidence="4">
    <location>
        <begin position="14"/>
        <end position="347"/>
    </location>
</feature>
<feature type="domain" description="PTS EIIB type-2" evidence="3">
    <location>
        <begin position="383"/>
        <end position="478"/>
    </location>
</feature>
<feature type="active site" description="Phosphocysteine intermediate; for EIIB activity" evidence="1 2">
    <location>
        <position position="389"/>
    </location>
</feature>
<feature type="modified residue" description="Phosphocysteine; by EIIA" evidence="1 2 3">
    <location>
        <position position="389"/>
    </location>
</feature>
<feature type="sequence conflict" description="In Ref. 1; AAF89987." evidence="6" ref="1">
    <original>Y</original>
    <variation>H</variation>
    <location>
        <position position="504"/>
    </location>
</feature>
<gene>
    <name evidence="5" type="primary">mtlA</name>
    <name type="ordered locus">SMU_1185</name>
</gene>
<protein>
    <recommendedName>
        <fullName evidence="5">PTS system mannitol-specific EIICB component</fullName>
    </recommendedName>
    <alternativeName>
        <fullName evidence="5">EIICB-Mtl</fullName>
        <shortName evidence="5">EII-Mtl</shortName>
    </alternativeName>
    <domain>
        <recommendedName>
            <fullName evidence="2">Mannitol permease IIC component</fullName>
        </recommendedName>
        <alternativeName>
            <fullName evidence="2">PTS system mannitol-specific EIIC component</fullName>
        </alternativeName>
    </domain>
    <domain>
        <recommendedName>
            <fullName evidence="2">Mannitol-specific phosphotransferase enzyme IIB component</fullName>
            <ecNumber evidence="1 2">2.7.1.197</ecNumber>
        </recommendedName>
        <alternativeName>
            <fullName evidence="2">PTS system mannitol-specific EIIB component</fullName>
        </alternativeName>
    </domain>
</protein>